<feature type="chain" id="PRO_0000251382" description="Large ribosomal subunit protein uL18">
    <location>
        <begin position="1"/>
        <end position="122"/>
    </location>
</feature>
<feature type="region of interest" description="Disordered" evidence="2">
    <location>
        <begin position="1"/>
        <end position="25"/>
    </location>
</feature>
<feature type="compositionally biased region" description="Basic residues" evidence="2">
    <location>
        <begin position="9"/>
        <end position="21"/>
    </location>
</feature>
<dbReference type="EMBL" id="CP000110">
    <property type="protein sequence ID" value="ABB34137.1"/>
    <property type="molecule type" value="Genomic_DNA"/>
</dbReference>
<dbReference type="RefSeq" id="WP_011363380.1">
    <property type="nucleotide sequence ID" value="NC_007516.1"/>
</dbReference>
<dbReference type="SMR" id="Q3AMP5"/>
<dbReference type="STRING" id="110662.Syncc9605_0361"/>
<dbReference type="KEGG" id="syd:Syncc9605_0361"/>
<dbReference type="eggNOG" id="COG0256">
    <property type="taxonomic scope" value="Bacteria"/>
</dbReference>
<dbReference type="HOGENOM" id="CLU_098841_0_1_3"/>
<dbReference type="OrthoDB" id="9810939at2"/>
<dbReference type="GO" id="GO:0022625">
    <property type="term" value="C:cytosolic large ribosomal subunit"/>
    <property type="evidence" value="ECO:0007669"/>
    <property type="project" value="TreeGrafter"/>
</dbReference>
<dbReference type="GO" id="GO:0008097">
    <property type="term" value="F:5S rRNA binding"/>
    <property type="evidence" value="ECO:0007669"/>
    <property type="project" value="TreeGrafter"/>
</dbReference>
<dbReference type="GO" id="GO:0003735">
    <property type="term" value="F:structural constituent of ribosome"/>
    <property type="evidence" value="ECO:0007669"/>
    <property type="project" value="InterPro"/>
</dbReference>
<dbReference type="GO" id="GO:0006412">
    <property type="term" value="P:translation"/>
    <property type="evidence" value="ECO:0007669"/>
    <property type="project" value="UniProtKB-UniRule"/>
</dbReference>
<dbReference type="CDD" id="cd00432">
    <property type="entry name" value="Ribosomal_L18_L5e"/>
    <property type="match status" value="1"/>
</dbReference>
<dbReference type="FunFam" id="3.30.420.100:FF:000001">
    <property type="entry name" value="50S ribosomal protein L18"/>
    <property type="match status" value="1"/>
</dbReference>
<dbReference type="Gene3D" id="3.30.420.100">
    <property type="match status" value="1"/>
</dbReference>
<dbReference type="HAMAP" id="MF_01337_B">
    <property type="entry name" value="Ribosomal_uL18_B"/>
    <property type="match status" value="1"/>
</dbReference>
<dbReference type="InterPro" id="IPR004389">
    <property type="entry name" value="Ribosomal_uL18_bac-type"/>
</dbReference>
<dbReference type="InterPro" id="IPR005484">
    <property type="entry name" value="Ribosomal_uL18_bac/euk"/>
</dbReference>
<dbReference type="NCBIfam" id="TIGR00060">
    <property type="entry name" value="L18_bact"/>
    <property type="match status" value="1"/>
</dbReference>
<dbReference type="PANTHER" id="PTHR12899">
    <property type="entry name" value="39S RIBOSOMAL PROTEIN L18, MITOCHONDRIAL"/>
    <property type="match status" value="1"/>
</dbReference>
<dbReference type="PANTHER" id="PTHR12899:SF3">
    <property type="entry name" value="LARGE RIBOSOMAL SUBUNIT PROTEIN UL18M"/>
    <property type="match status" value="1"/>
</dbReference>
<dbReference type="Pfam" id="PF00861">
    <property type="entry name" value="Ribosomal_L18p"/>
    <property type="match status" value="1"/>
</dbReference>
<dbReference type="SUPFAM" id="SSF53137">
    <property type="entry name" value="Translational machinery components"/>
    <property type="match status" value="1"/>
</dbReference>
<organism>
    <name type="scientific">Synechococcus sp. (strain CC9605)</name>
    <dbReference type="NCBI Taxonomy" id="110662"/>
    <lineage>
        <taxon>Bacteria</taxon>
        <taxon>Bacillati</taxon>
        <taxon>Cyanobacteriota</taxon>
        <taxon>Cyanophyceae</taxon>
        <taxon>Synechococcales</taxon>
        <taxon>Synechococcaceae</taxon>
        <taxon>Synechococcus</taxon>
    </lineage>
</organism>
<proteinExistence type="inferred from homology"/>
<comment type="function">
    <text evidence="1">This is one of the proteins that bind and probably mediate the attachment of the 5S RNA into the large ribosomal subunit, where it forms part of the central protuberance.</text>
</comment>
<comment type="subunit">
    <text evidence="1">Part of the 50S ribosomal subunit; part of the 5S rRNA/L5/L18/L25 subcomplex. Contacts the 5S and 23S rRNAs.</text>
</comment>
<comment type="similarity">
    <text evidence="1">Belongs to the universal ribosomal protein uL18 family.</text>
</comment>
<accession>Q3AMP5</accession>
<name>RL18_SYNSC</name>
<evidence type="ECO:0000255" key="1">
    <source>
        <dbReference type="HAMAP-Rule" id="MF_01337"/>
    </source>
</evidence>
<evidence type="ECO:0000256" key="2">
    <source>
        <dbReference type="SAM" id="MobiDB-lite"/>
    </source>
</evidence>
<evidence type="ECO:0000305" key="3"/>
<sequence length="122" mass="13372">MSQISRKQQTQKRHRRLRRHITGTSDRPRLAVFRSNNHIYAQVIDDAAQSTLCSASTVDKELRTGLKAPAGSCDASVAVGELVAKRAMAKGIQQVVFDRGGNLYHGRIKALADAAREAGLQF</sequence>
<reference key="1">
    <citation type="submission" date="2005-07" db="EMBL/GenBank/DDBJ databases">
        <title>Complete sequence of Synechococcus sp. CC9605.</title>
        <authorList>
            <consortium name="US DOE Joint Genome Institute"/>
            <person name="Copeland A."/>
            <person name="Lucas S."/>
            <person name="Lapidus A."/>
            <person name="Barry K."/>
            <person name="Detter J.C."/>
            <person name="Glavina T."/>
            <person name="Hammon N."/>
            <person name="Israni S."/>
            <person name="Pitluck S."/>
            <person name="Schmutz J."/>
            <person name="Martinez M."/>
            <person name="Larimer F."/>
            <person name="Land M."/>
            <person name="Kyrpides N."/>
            <person name="Ivanova N."/>
            <person name="Richardson P."/>
        </authorList>
    </citation>
    <scope>NUCLEOTIDE SEQUENCE [LARGE SCALE GENOMIC DNA]</scope>
    <source>
        <strain>CC9605</strain>
    </source>
</reference>
<protein>
    <recommendedName>
        <fullName evidence="1">Large ribosomal subunit protein uL18</fullName>
    </recommendedName>
    <alternativeName>
        <fullName evidence="3">50S ribosomal protein L18</fullName>
    </alternativeName>
</protein>
<gene>
    <name evidence="1" type="primary">rplR</name>
    <name evidence="1" type="synonym">rpl18</name>
    <name type="ordered locus">Syncc9605_0361</name>
</gene>
<keyword id="KW-0687">Ribonucleoprotein</keyword>
<keyword id="KW-0689">Ribosomal protein</keyword>
<keyword id="KW-0694">RNA-binding</keyword>
<keyword id="KW-0699">rRNA-binding</keyword>